<feature type="chain" id="PRO_1000214946" description="Large ribosomal subunit protein uL13">
    <location>
        <begin position="1"/>
        <end position="142"/>
    </location>
</feature>
<dbReference type="EMBL" id="CP001649">
    <property type="protein sequence ID" value="ACS81174.1"/>
    <property type="molecule type" value="Genomic_DNA"/>
</dbReference>
<dbReference type="RefSeq" id="WP_015852990.1">
    <property type="nucleotide sequence ID" value="NC_012881.1"/>
</dbReference>
<dbReference type="SMR" id="C6C1J9"/>
<dbReference type="STRING" id="526222.Desal_3123"/>
<dbReference type="KEGG" id="dsa:Desal_3123"/>
<dbReference type="eggNOG" id="COG0102">
    <property type="taxonomic scope" value="Bacteria"/>
</dbReference>
<dbReference type="HOGENOM" id="CLU_082184_2_2_7"/>
<dbReference type="OrthoDB" id="9801330at2"/>
<dbReference type="Proteomes" id="UP000002601">
    <property type="component" value="Chromosome"/>
</dbReference>
<dbReference type="GO" id="GO:0022625">
    <property type="term" value="C:cytosolic large ribosomal subunit"/>
    <property type="evidence" value="ECO:0007669"/>
    <property type="project" value="TreeGrafter"/>
</dbReference>
<dbReference type="GO" id="GO:0003729">
    <property type="term" value="F:mRNA binding"/>
    <property type="evidence" value="ECO:0007669"/>
    <property type="project" value="TreeGrafter"/>
</dbReference>
<dbReference type="GO" id="GO:0003735">
    <property type="term" value="F:structural constituent of ribosome"/>
    <property type="evidence" value="ECO:0007669"/>
    <property type="project" value="InterPro"/>
</dbReference>
<dbReference type="GO" id="GO:0017148">
    <property type="term" value="P:negative regulation of translation"/>
    <property type="evidence" value="ECO:0007669"/>
    <property type="project" value="TreeGrafter"/>
</dbReference>
<dbReference type="GO" id="GO:0006412">
    <property type="term" value="P:translation"/>
    <property type="evidence" value="ECO:0007669"/>
    <property type="project" value="UniProtKB-UniRule"/>
</dbReference>
<dbReference type="CDD" id="cd00392">
    <property type="entry name" value="Ribosomal_L13"/>
    <property type="match status" value="1"/>
</dbReference>
<dbReference type="FunFam" id="3.90.1180.10:FF:000001">
    <property type="entry name" value="50S ribosomal protein L13"/>
    <property type="match status" value="1"/>
</dbReference>
<dbReference type="Gene3D" id="3.90.1180.10">
    <property type="entry name" value="Ribosomal protein L13"/>
    <property type="match status" value="1"/>
</dbReference>
<dbReference type="HAMAP" id="MF_01366">
    <property type="entry name" value="Ribosomal_uL13"/>
    <property type="match status" value="1"/>
</dbReference>
<dbReference type="InterPro" id="IPR005822">
    <property type="entry name" value="Ribosomal_uL13"/>
</dbReference>
<dbReference type="InterPro" id="IPR005823">
    <property type="entry name" value="Ribosomal_uL13_bac-type"/>
</dbReference>
<dbReference type="InterPro" id="IPR023563">
    <property type="entry name" value="Ribosomal_uL13_CS"/>
</dbReference>
<dbReference type="InterPro" id="IPR036899">
    <property type="entry name" value="Ribosomal_uL13_sf"/>
</dbReference>
<dbReference type="NCBIfam" id="TIGR01066">
    <property type="entry name" value="rplM_bact"/>
    <property type="match status" value="1"/>
</dbReference>
<dbReference type="PANTHER" id="PTHR11545:SF2">
    <property type="entry name" value="LARGE RIBOSOMAL SUBUNIT PROTEIN UL13M"/>
    <property type="match status" value="1"/>
</dbReference>
<dbReference type="PANTHER" id="PTHR11545">
    <property type="entry name" value="RIBOSOMAL PROTEIN L13"/>
    <property type="match status" value="1"/>
</dbReference>
<dbReference type="Pfam" id="PF00572">
    <property type="entry name" value="Ribosomal_L13"/>
    <property type="match status" value="1"/>
</dbReference>
<dbReference type="PIRSF" id="PIRSF002181">
    <property type="entry name" value="Ribosomal_L13"/>
    <property type="match status" value="1"/>
</dbReference>
<dbReference type="SUPFAM" id="SSF52161">
    <property type="entry name" value="Ribosomal protein L13"/>
    <property type="match status" value="1"/>
</dbReference>
<dbReference type="PROSITE" id="PS00783">
    <property type="entry name" value="RIBOSOMAL_L13"/>
    <property type="match status" value="1"/>
</dbReference>
<evidence type="ECO:0000255" key="1">
    <source>
        <dbReference type="HAMAP-Rule" id="MF_01366"/>
    </source>
</evidence>
<evidence type="ECO:0000305" key="2"/>
<accession>C6C1J9</accession>
<comment type="function">
    <text evidence="1">This protein is one of the early assembly proteins of the 50S ribosomal subunit, although it is not seen to bind rRNA by itself. It is important during the early stages of 50S assembly.</text>
</comment>
<comment type="subunit">
    <text evidence="1">Part of the 50S ribosomal subunit.</text>
</comment>
<comment type="similarity">
    <text evidence="1">Belongs to the universal ribosomal protein uL13 family.</text>
</comment>
<organism>
    <name type="scientific">Maridesulfovibrio salexigens (strain ATCC 14822 / DSM 2638 / NCIMB 8403 / VKM B-1763)</name>
    <name type="common">Desulfovibrio salexigens</name>
    <dbReference type="NCBI Taxonomy" id="526222"/>
    <lineage>
        <taxon>Bacteria</taxon>
        <taxon>Pseudomonadati</taxon>
        <taxon>Thermodesulfobacteriota</taxon>
        <taxon>Desulfovibrionia</taxon>
        <taxon>Desulfovibrionales</taxon>
        <taxon>Desulfovibrionaceae</taxon>
        <taxon>Maridesulfovibrio</taxon>
    </lineage>
</organism>
<reference key="1">
    <citation type="submission" date="2009-06" db="EMBL/GenBank/DDBJ databases">
        <title>Complete sequence of Desulfovibrio salexigens DSM 2638.</title>
        <authorList>
            <consortium name="US DOE Joint Genome Institute"/>
            <person name="Lucas S."/>
            <person name="Copeland A."/>
            <person name="Lapidus A."/>
            <person name="Glavina del Rio T."/>
            <person name="Tice H."/>
            <person name="Bruce D."/>
            <person name="Goodwin L."/>
            <person name="Pitluck S."/>
            <person name="Munk A.C."/>
            <person name="Brettin T."/>
            <person name="Detter J.C."/>
            <person name="Han C."/>
            <person name="Tapia R."/>
            <person name="Larimer F."/>
            <person name="Land M."/>
            <person name="Hauser L."/>
            <person name="Kyrpides N."/>
            <person name="Anderson I."/>
            <person name="Wall J.D."/>
            <person name="Arkin A.P."/>
            <person name="Dehal P."/>
            <person name="Chivian D."/>
            <person name="Giles B."/>
            <person name="Hazen T.C."/>
        </authorList>
    </citation>
    <scope>NUCLEOTIDE SEQUENCE [LARGE SCALE GENOMIC DNA]</scope>
    <source>
        <strain>ATCC 14822 / DSM 2638 / NCIMB 8403 / VKM B-1763</strain>
    </source>
</reference>
<gene>
    <name evidence="1" type="primary">rplM</name>
    <name type="ordered locus">Desal_3123</name>
</gene>
<protein>
    <recommendedName>
        <fullName evidence="1">Large ribosomal subunit protein uL13</fullName>
    </recommendedName>
    <alternativeName>
        <fullName evidence="2">50S ribosomal protein L13</fullName>
    </alternativeName>
</protein>
<proteinExistence type="inferred from homology"/>
<name>RL13_MARSD</name>
<keyword id="KW-1185">Reference proteome</keyword>
<keyword id="KW-0687">Ribonucleoprotein</keyword>
<keyword id="KW-0689">Ribosomal protein</keyword>
<sequence>MKTYIPKDEDINREWFVVDAENMVLGRLATQIANKLRGKDKAMFTPHVDTGDFVVVLNADKIKVTGNKMDQKTYYKHTNHPGGLKERTLKVMLEKKPEVVIETAVRGMLPKNRLGKQMIKKLKVYAGTEHPHTAQQPKVLEF</sequence>